<gene>
    <name type="primary">ybhH</name>
    <name type="ordered locus">b0769</name>
    <name type="ordered locus">JW0752</name>
</gene>
<organism>
    <name type="scientific">Escherichia coli (strain K12)</name>
    <dbReference type="NCBI Taxonomy" id="83333"/>
    <lineage>
        <taxon>Bacteria</taxon>
        <taxon>Pseudomonadati</taxon>
        <taxon>Pseudomonadota</taxon>
        <taxon>Gammaproteobacteria</taxon>
        <taxon>Enterobacterales</taxon>
        <taxon>Enterobacteriaceae</taxon>
        <taxon>Escherichia</taxon>
    </lineage>
</organism>
<protein>
    <recommendedName>
        <fullName>Putative isomerase YbhH</fullName>
        <ecNumber>5.-.-.-</ecNumber>
    </recommendedName>
</protein>
<accession>P0AAV8</accession>
<accession>P75762</accession>
<reference key="1">
    <citation type="journal article" date="1996" name="DNA Res.">
        <title>A 718-kb DNA sequence of the Escherichia coli K-12 genome corresponding to the 12.7-28.0 min region on the linkage map.</title>
        <authorList>
            <person name="Oshima T."/>
            <person name="Aiba H."/>
            <person name="Baba T."/>
            <person name="Fujita K."/>
            <person name="Hayashi K."/>
            <person name="Honjo A."/>
            <person name="Ikemoto K."/>
            <person name="Inada T."/>
            <person name="Itoh T."/>
            <person name="Kajihara M."/>
            <person name="Kanai K."/>
            <person name="Kashimoto K."/>
            <person name="Kimura S."/>
            <person name="Kitagawa M."/>
            <person name="Makino K."/>
            <person name="Masuda S."/>
            <person name="Miki T."/>
            <person name="Mizobuchi K."/>
            <person name="Mori H."/>
            <person name="Motomura K."/>
            <person name="Nakamura Y."/>
            <person name="Nashimoto H."/>
            <person name="Nishio Y."/>
            <person name="Saito N."/>
            <person name="Sampei G."/>
            <person name="Seki Y."/>
            <person name="Tagami H."/>
            <person name="Takemoto K."/>
            <person name="Wada C."/>
            <person name="Yamamoto Y."/>
            <person name="Yano M."/>
            <person name="Horiuchi T."/>
        </authorList>
    </citation>
    <scope>NUCLEOTIDE SEQUENCE [LARGE SCALE GENOMIC DNA]</scope>
    <source>
        <strain>K12 / W3110 / ATCC 27325 / DSM 5911</strain>
    </source>
</reference>
<reference key="2">
    <citation type="journal article" date="1997" name="Science">
        <title>The complete genome sequence of Escherichia coli K-12.</title>
        <authorList>
            <person name="Blattner F.R."/>
            <person name="Plunkett G. III"/>
            <person name="Bloch C.A."/>
            <person name="Perna N.T."/>
            <person name="Burland V."/>
            <person name="Riley M."/>
            <person name="Collado-Vides J."/>
            <person name="Glasner J.D."/>
            <person name="Rode C.K."/>
            <person name="Mayhew G.F."/>
            <person name="Gregor J."/>
            <person name="Davis N.W."/>
            <person name="Kirkpatrick H.A."/>
            <person name="Goeden M.A."/>
            <person name="Rose D.J."/>
            <person name="Mau B."/>
            <person name="Shao Y."/>
        </authorList>
    </citation>
    <scope>NUCLEOTIDE SEQUENCE [LARGE SCALE GENOMIC DNA]</scope>
    <source>
        <strain>K12 / MG1655 / ATCC 47076</strain>
    </source>
</reference>
<reference key="3">
    <citation type="journal article" date="2006" name="Mol. Syst. Biol.">
        <title>Highly accurate genome sequences of Escherichia coli K-12 strains MG1655 and W3110.</title>
        <authorList>
            <person name="Hayashi K."/>
            <person name="Morooka N."/>
            <person name="Yamamoto Y."/>
            <person name="Fujita K."/>
            <person name="Isono K."/>
            <person name="Choi S."/>
            <person name="Ohtsubo E."/>
            <person name="Baba T."/>
            <person name="Wanner B.L."/>
            <person name="Mori H."/>
            <person name="Horiuchi T."/>
        </authorList>
    </citation>
    <scope>NUCLEOTIDE SEQUENCE [LARGE SCALE GENOMIC DNA]</scope>
    <source>
        <strain>K12 / W3110 / ATCC 27325 / DSM 5911</strain>
    </source>
</reference>
<evidence type="ECO:0000305" key="1"/>
<evidence type="ECO:0007829" key="2">
    <source>
        <dbReference type="PDB" id="6OTV"/>
    </source>
</evidence>
<sequence length="350" mass="37060">MKKIPCVMMRGGTSRGAFLLAEHLPEDQTQRDKILMAIMGSGNDLEIDGIGGGNPLTSKVAIISRSSDPRADVDYLFAQVIVHEQRVDTTPNCGNMLSGVGAFAIENGLIAATSPVTRVRIRNVNTGTFIEADVQTPNGVVEYEGSARIDGVPGTAAPVALTFLNAAGTKTGKVFPTDNQIDYFDDVPVTCIDMAMPVVIIPAEYLGKTGYELPAELDADKALLARIESIRLQAGKAMGLGDVSNMVIPKPVLISPAQKGGAINVRYFMPHSCHRALAITGAIAISSSCALEGTVTRQIVPSVGYGNINIEHPSGALDVHLSNEGQDATTLRASVIRTTRKIFSGEVYLP</sequence>
<name>YBHH_ECOLI</name>
<feature type="chain" id="PRO_0000168711" description="Putative isomerase YbhH">
    <location>
        <begin position="1"/>
        <end position="350"/>
    </location>
</feature>
<feature type="strand" evidence="2">
    <location>
        <begin position="3"/>
        <end position="11"/>
    </location>
</feature>
<feature type="strand" evidence="2">
    <location>
        <begin position="14"/>
        <end position="20"/>
    </location>
</feature>
<feature type="helix" evidence="2">
    <location>
        <begin position="21"/>
        <end position="23"/>
    </location>
</feature>
<feature type="helix" evidence="2">
    <location>
        <begin position="28"/>
        <end position="39"/>
    </location>
</feature>
<feature type="turn" evidence="2">
    <location>
        <begin position="40"/>
        <end position="42"/>
    </location>
</feature>
<feature type="strand" evidence="2">
    <location>
        <begin position="49"/>
        <end position="51"/>
    </location>
</feature>
<feature type="helix" evidence="2">
    <location>
        <begin position="55"/>
        <end position="57"/>
    </location>
</feature>
<feature type="strand" evidence="2">
    <location>
        <begin position="58"/>
        <end position="65"/>
    </location>
</feature>
<feature type="strand" evidence="2">
    <location>
        <begin position="72"/>
        <end position="80"/>
    </location>
</feature>
<feature type="strand" evidence="2">
    <location>
        <begin position="82"/>
        <end position="85"/>
    </location>
</feature>
<feature type="helix" evidence="2">
    <location>
        <begin position="94"/>
        <end position="106"/>
    </location>
</feature>
<feature type="strand" evidence="2">
    <location>
        <begin position="114"/>
        <end position="123"/>
    </location>
</feature>
<feature type="turn" evidence="2">
    <location>
        <begin position="124"/>
        <end position="126"/>
    </location>
</feature>
<feature type="strand" evidence="2">
    <location>
        <begin position="129"/>
        <end position="135"/>
    </location>
</feature>
<feature type="helix" evidence="2">
    <location>
        <begin position="137"/>
        <end position="139"/>
    </location>
</feature>
<feature type="strand" evidence="2">
    <location>
        <begin position="158"/>
        <end position="165"/>
    </location>
</feature>
<feature type="strand" evidence="2">
    <location>
        <begin position="169"/>
        <end position="175"/>
    </location>
</feature>
<feature type="strand" evidence="2">
    <location>
        <begin position="180"/>
        <end position="184"/>
    </location>
</feature>
<feature type="strand" evidence="2">
    <location>
        <begin position="187"/>
        <end position="202"/>
    </location>
</feature>
<feature type="helix" evidence="2">
    <location>
        <begin position="203"/>
        <end position="206"/>
    </location>
</feature>
<feature type="helix" evidence="2">
    <location>
        <begin position="214"/>
        <end position="219"/>
    </location>
</feature>
<feature type="helix" evidence="2">
    <location>
        <begin position="221"/>
        <end position="237"/>
    </location>
</feature>
<feature type="helix" evidence="2">
    <location>
        <begin position="243"/>
        <end position="245"/>
    </location>
</feature>
<feature type="strand" evidence="2">
    <location>
        <begin position="249"/>
        <end position="255"/>
    </location>
</feature>
<feature type="strand" evidence="2">
    <location>
        <begin position="258"/>
        <end position="273"/>
    </location>
</feature>
<feature type="helix" evidence="2">
    <location>
        <begin position="279"/>
        <end position="290"/>
    </location>
</feature>
<feature type="helix" evidence="2">
    <location>
        <begin position="295"/>
        <end position="298"/>
    </location>
</feature>
<feature type="strand" evidence="2">
    <location>
        <begin position="305"/>
        <end position="312"/>
    </location>
</feature>
<feature type="strand" evidence="2">
    <location>
        <begin position="315"/>
        <end position="322"/>
    </location>
</feature>
<feature type="strand" evidence="2">
    <location>
        <begin position="324"/>
        <end position="327"/>
    </location>
</feature>
<feature type="helix" evidence="2">
    <location>
        <begin position="328"/>
        <end position="330"/>
    </location>
</feature>
<feature type="strand" evidence="2">
    <location>
        <begin position="332"/>
        <end position="348"/>
    </location>
</feature>
<proteinExistence type="evidence at protein level"/>
<comment type="similarity">
    <text evidence="1">Belongs to the PrpF family.</text>
</comment>
<keyword id="KW-0002">3D-structure</keyword>
<keyword id="KW-0413">Isomerase</keyword>
<keyword id="KW-1185">Reference proteome</keyword>
<dbReference type="EC" id="5.-.-.-"/>
<dbReference type="EMBL" id="U00096">
    <property type="protein sequence ID" value="AAC73856.1"/>
    <property type="molecule type" value="Genomic_DNA"/>
</dbReference>
<dbReference type="EMBL" id="AP009048">
    <property type="protein sequence ID" value="BAA35433.1"/>
    <property type="molecule type" value="Genomic_DNA"/>
</dbReference>
<dbReference type="PIR" id="A64813">
    <property type="entry name" value="A64813"/>
</dbReference>
<dbReference type="RefSeq" id="NP_415290.1">
    <property type="nucleotide sequence ID" value="NC_000913.3"/>
</dbReference>
<dbReference type="RefSeq" id="WP_000723652.1">
    <property type="nucleotide sequence ID" value="NZ_SSZK01000002.1"/>
</dbReference>
<dbReference type="PDB" id="6OTV">
    <property type="method" value="X-ray"/>
    <property type="resolution" value="2.40 A"/>
    <property type="chains" value="A/B=1-350"/>
</dbReference>
<dbReference type="PDBsum" id="6OTV"/>
<dbReference type="SMR" id="P0AAV8"/>
<dbReference type="BioGRID" id="4261843">
    <property type="interactions" value="9"/>
</dbReference>
<dbReference type="FunCoup" id="P0AAV8">
    <property type="interactions" value="114"/>
</dbReference>
<dbReference type="STRING" id="511145.b0769"/>
<dbReference type="PaxDb" id="511145-b0769"/>
<dbReference type="EnsemblBacteria" id="AAC73856">
    <property type="protein sequence ID" value="AAC73856"/>
    <property type="gene ID" value="b0769"/>
</dbReference>
<dbReference type="GeneID" id="945375"/>
<dbReference type="KEGG" id="ecj:JW0752"/>
<dbReference type="KEGG" id="eco:b0769"/>
<dbReference type="KEGG" id="ecoc:C3026_03900"/>
<dbReference type="PATRIC" id="fig|511145.12.peg.795"/>
<dbReference type="EchoBASE" id="EB3428"/>
<dbReference type="eggNOG" id="COG2828">
    <property type="taxonomic scope" value="Bacteria"/>
</dbReference>
<dbReference type="HOGENOM" id="CLU_026443_2_1_6"/>
<dbReference type="InParanoid" id="P0AAV8"/>
<dbReference type="OMA" id="MQRIPCV"/>
<dbReference type="OrthoDB" id="9779763at2"/>
<dbReference type="PhylomeDB" id="P0AAV8"/>
<dbReference type="BioCyc" id="EcoCyc:G6399-MONOMER"/>
<dbReference type="PRO" id="PR:P0AAV8"/>
<dbReference type="Proteomes" id="UP000000625">
    <property type="component" value="Chromosome"/>
</dbReference>
<dbReference type="GO" id="GO:0016853">
    <property type="term" value="F:isomerase activity"/>
    <property type="evidence" value="ECO:0007669"/>
    <property type="project" value="UniProtKB-KW"/>
</dbReference>
<dbReference type="Gene3D" id="3.10.310.10">
    <property type="entry name" value="Diaminopimelate Epimerase, Chain A, domain 1"/>
    <property type="match status" value="2"/>
</dbReference>
<dbReference type="InterPro" id="IPR047687">
    <property type="entry name" value="OMA_tautomer-like"/>
</dbReference>
<dbReference type="InterPro" id="IPR007400">
    <property type="entry name" value="PrpF-like"/>
</dbReference>
<dbReference type="NCBIfam" id="NF033377">
    <property type="entry name" value="OMA_tautomer"/>
    <property type="match status" value="1"/>
</dbReference>
<dbReference type="PANTHER" id="PTHR43709">
    <property type="entry name" value="ACONITATE ISOMERASE-RELATED"/>
    <property type="match status" value="1"/>
</dbReference>
<dbReference type="PANTHER" id="PTHR43709:SF3">
    <property type="entry name" value="ISOMERASE YBHH-RELATED"/>
    <property type="match status" value="1"/>
</dbReference>
<dbReference type="Pfam" id="PF04303">
    <property type="entry name" value="PrpF"/>
    <property type="match status" value="1"/>
</dbReference>
<dbReference type="SUPFAM" id="SSF54506">
    <property type="entry name" value="Diaminopimelate epimerase-like"/>
    <property type="match status" value="2"/>
</dbReference>